<comment type="function">
    <text evidence="1">Involved in urease metallocenter assembly. Binds nickel. Probably functions as a nickel donor during metallocenter assembly.</text>
</comment>
<comment type="subcellular location">
    <subcellularLocation>
        <location evidence="1">Cytoplasm</location>
    </subcellularLocation>
</comment>
<comment type="similarity">
    <text evidence="1">Belongs to the UreE family.</text>
</comment>
<evidence type="ECO:0000255" key="1">
    <source>
        <dbReference type="HAMAP-Rule" id="MF_00822"/>
    </source>
</evidence>
<evidence type="ECO:0000256" key="2">
    <source>
        <dbReference type="SAM" id="MobiDB-lite"/>
    </source>
</evidence>
<proteinExistence type="inferred from homology"/>
<dbReference type="EMBL" id="CP000390">
    <property type="protein sequence ID" value="ABG64062.1"/>
    <property type="molecule type" value="Genomic_DNA"/>
</dbReference>
<dbReference type="SMR" id="Q11EW3"/>
<dbReference type="STRING" id="266779.Meso_2685"/>
<dbReference type="KEGG" id="mes:Meso_2685"/>
<dbReference type="eggNOG" id="COG2371">
    <property type="taxonomic scope" value="Bacteria"/>
</dbReference>
<dbReference type="HOGENOM" id="CLU_093757_1_0_5"/>
<dbReference type="OrthoDB" id="9802215at2"/>
<dbReference type="GO" id="GO:0005737">
    <property type="term" value="C:cytoplasm"/>
    <property type="evidence" value="ECO:0007669"/>
    <property type="project" value="UniProtKB-SubCell"/>
</dbReference>
<dbReference type="GO" id="GO:0016151">
    <property type="term" value="F:nickel cation binding"/>
    <property type="evidence" value="ECO:0007669"/>
    <property type="project" value="UniProtKB-UniRule"/>
</dbReference>
<dbReference type="GO" id="GO:0051082">
    <property type="term" value="F:unfolded protein binding"/>
    <property type="evidence" value="ECO:0007669"/>
    <property type="project" value="UniProtKB-UniRule"/>
</dbReference>
<dbReference type="GO" id="GO:0006457">
    <property type="term" value="P:protein folding"/>
    <property type="evidence" value="ECO:0007669"/>
    <property type="project" value="InterPro"/>
</dbReference>
<dbReference type="GO" id="GO:0065003">
    <property type="term" value="P:protein-containing complex assembly"/>
    <property type="evidence" value="ECO:0007669"/>
    <property type="project" value="InterPro"/>
</dbReference>
<dbReference type="GO" id="GO:0019627">
    <property type="term" value="P:urea metabolic process"/>
    <property type="evidence" value="ECO:0007669"/>
    <property type="project" value="InterPro"/>
</dbReference>
<dbReference type="CDD" id="cd00571">
    <property type="entry name" value="UreE"/>
    <property type="match status" value="1"/>
</dbReference>
<dbReference type="Gene3D" id="2.60.260.20">
    <property type="entry name" value="Urease metallochaperone UreE, N-terminal domain"/>
    <property type="match status" value="1"/>
</dbReference>
<dbReference type="Gene3D" id="3.30.70.790">
    <property type="entry name" value="UreE, C-terminal domain"/>
    <property type="match status" value="1"/>
</dbReference>
<dbReference type="HAMAP" id="MF_00822">
    <property type="entry name" value="UreE"/>
    <property type="match status" value="1"/>
</dbReference>
<dbReference type="InterPro" id="IPR012406">
    <property type="entry name" value="UreE"/>
</dbReference>
<dbReference type="InterPro" id="IPR007864">
    <property type="entry name" value="UreE_C_dom"/>
</dbReference>
<dbReference type="InterPro" id="IPR004029">
    <property type="entry name" value="UreE_N"/>
</dbReference>
<dbReference type="InterPro" id="IPR036118">
    <property type="entry name" value="UreE_N_sf"/>
</dbReference>
<dbReference type="Pfam" id="PF05194">
    <property type="entry name" value="UreE_C"/>
    <property type="match status" value="1"/>
</dbReference>
<dbReference type="Pfam" id="PF02814">
    <property type="entry name" value="UreE_N"/>
    <property type="match status" value="1"/>
</dbReference>
<dbReference type="PIRSF" id="PIRSF036402">
    <property type="entry name" value="Ureas_acces_UreE"/>
    <property type="match status" value="1"/>
</dbReference>
<dbReference type="SMART" id="SM00988">
    <property type="entry name" value="UreE_N"/>
    <property type="match status" value="1"/>
</dbReference>
<dbReference type="SUPFAM" id="SSF69737">
    <property type="entry name" value="Urease metallochaperone UreE, C-terminal domain"/>
    <property type="match status" value="1"/>
</dbReference>
<dbReference type="SUPFAM" id="SSF69287">
    <property type="entry name" value="Urease metallochaperone UreE, N-terminal domain"/>
    <property type="match status" value="1"/>
</dbReference>
<feature type="chain" id="PRO_1000062549" description="Urease accessory protein UreE">
    <location>
        <begin position="1"/>
        <end position="158"/>
    </location>
</feature>
<feature type="region of interest" description="Disordered" evidence="2">
    <location>
        <begin position="133"/>
        <end position="158"/>
    </location>
</feature>
<feature type="compositionally biased region" description="Basic and acidic residues" evidence="2">
    <location>
        <begin position="141"/>
        <end position="158"/>
    </location>
</feature>
<reference key="1">
    <citation type="submission" date="2006-06" db="EMBL/GenBank/DDBJ databases">
        <title>Complete sequence of chromosome of Mesorhizobium sp. BNC1.</title>
        <authorList>
            <consortium name="US DOE Joint Genome Institute"/>
            <person name="Copeland A."/>
            <person name="Lucas S."/>
            <person name="Lapidus A."/>
            <person name="Barry K."/>
            <person name="Detter J.C."/>
            <person name="Glavina del Rio T."/>
            <person name="Hammon N."/>
            <person name="Israni S."/>
            <person name="Dalin E."/>
            <person name="Tice H."/>
            <person name="Pitluck S."/>
            <person name="Chertkov O."/>
            <person name="Brettin T."/>
            <person name="Bruce D."/>
            <person name="Han C."/>
            <person name="Tapia R."/>
            <person name="Gilna P."/>
            <person name="Schmutz J."/>
            <person name="Larimer F."/>
            <person name="Land M."/>
            <person name="Hauser L."/>
            <person name="Kyrpides N."/>
            <person name="Mikhailova N."/>
            <person name="Richardson P."/>
        </authorList>
    </citation>
    <scope>NUCLEOTIDE SEQUENCE [LARGE SCALE GENOMIC DNA]</scope>
    <source>
        <strain>BNC1</strain>
    </source>
</reference>
<protein>
    <recommendedName>
        <fullName evidence="1">Urease accessory protein UreE</fullName>
    </recommendedName>
</protein>
<organism>
    <name type="scientific">Chelativorans sp. (strain BNC1)</name>
    <dbReference type="NCBI Taxonomy" id="266779"/>
    <lineage>
        <taxon>Bacteria</taxon>
        <taxon>Pseudomonadati</taxon>
        <taxon>Pseudomonadota</taxon>
        <taxon>Alphaproteobacteria</taxon>
        <taxon>Hyphomicrobiales</taxon>
        <taxon>Phyllobacteriaceae</taxon>
        <taxon>Chelativorans</taxon>
    </lineage>
</organism>
<gene>
    <name evidence="1" type="primary">ureE</name>
    <name type="ordered locus">Meso_2685</name>
</gene>
<accession>Q11EW3</accession>
<sequence>MIRATSVTAKFDRAFDTITLDETARHRRRMMMRSDNGIEFLLDLPEARLLNHGDGLLLEDGRVIEVRALPEPLYEVRGRDSRHLLALAWQIGNRHLPAEIAEDRILIRRDHVIRDMLEGLGAMVTDITAPFSPEGGAYQAHSHDGHSHHQGHTHDHHD</sequence>
<keyword id="KW-0143">Chaperone</keyword>
<keyword id="KW-0963">Cytoplasm</keyword>
<keyword id="KW-0533">Nickel</keyword>
<keyword id="KW-0996">Nickel insertion</keyword>
<name>UREE_CHESB</name>